<comment type="function">
    <text evidence="1">Involved in the degradation of phospho-AI-2, thereby terminating induction of the lsr operon and closing the AI-2 signaling cycle. Catalyzes the transfer of an acetyl moiety from 3-hydroxy-5-phosphonooxypentane-2,4-dione to CoA to form glycerone phosphate and acetyl-CoA.</text>
</comment>
<comment type="catalytic activity">
    <reaction evidence="1">
        <text>dihydroxyacetone phosphate + acetyl-CoA = 3-hydroxy-2,4-dioxopentyl phosphate + CoA</text>
        <dbReference type="Rhea" id="RHEA:44736"/>
        <dbReference type="ChEBI" id="CHEBI:57287"/>
        <dbReference type="ChEBI" id="CHEBI:57288"/>
        <dbReference type="ChEBI" id="CHEBI:57642"/>
        <dbReference type="ChEBI" id="CHEBI:84359"/>
        <dbReference type="EC" id="2.3.1.245"/>
    </reaction>
</comment>
<comment type="subunit">
    <text evidence="1">Homodecamer.</text>
</comment>
<comment type="subcellular location">
    <subcellularLocation>
        <location evidence="1">Cytoplasm</location>
    </subcellularLocation>
</comment>
<comment type="similarity">
    <text evidence="1">Belongs to the DeoC/FbaB aldolase family.</text>
</comment>
<feature type="chain" id="PRO_0000351533" description="3-hydroxy-5-phosphonooxypentane-2,4-dione thiolase">
    <location>
        <begin position="1"/>
        <end position="291"/>
    </location>
</feature>
<feature type="active site" description="Schiff-base intermediate with substrate" evidence="1">
    <location>
        <position position="203"/>
    </location>
</feature>
<reference key="1">
    <citation type="journal article" date="2006" name="PLoS Genet.">
        <title>The complete genome sequence and comparative genome analysis of the high pathogenicity Yersinia enterocolitica strain 8081.</title>
        <authorList>
            <person name="Thomson N.R."/>
            <person name="Howard S."/>
            <person name="Wren B.W."/>
            <person name="Holden M.T.G."/>
            <person name="Crossman L."/>
            <person name="Challis G.L."/>
            <person name="Churcher C."/>
            <person name="Mungall K."/>
            <person name="Brooks K."/>
            <person name="Chillingworth T."/>
            <person name="Feltwell T."/>
            <person name="Abdellah Z."/>
            <person name="Hauser H."/>
            <person name="Jagels K."/>
            <person name="Maddison M."/>
            <person name="Moule S."/>
            <person name="Sanders M."/>
            <person name="Whitehead S."/>
            <person name="Quail M.A."/>
            <person name="Dougan G."/>
            <person name="Parkhill J."/>
            <person name="Prentice M.B."/>
        </authorList>
    </citation>
    <scope>NUCLEOTIDE SEQUENCE [LARGE SCALE GENOMIC DNA]</scope>
    <source>
        <strain>NCTC 13174 / 8081</strain>
    </source>
</reference>
<sequence>MADLDDIKDGKDFGIGVPQQNPAFTLKGCGSLDWGMQSRLARIFNPKTNRTVMLAFDHGYFQGPTTGLERIDINIAPLFEYADVLMCTRGILRSIVPAAANRPVVLRASGANSILTDLSNEAVAVAMEDALRLNSCAVAAQVYIGTEHEHQSIKNIIQLVDQGIRYGMPTMAVTGVGKDMARDQRYFSLATRIAAEMGAQVIKTYYVDSGFERIAAGCPVPIVIAGGKKLPERDALEMCYQAIDQGASGVDMGRNIFQSEAPIAMLKAVHAVVHKNENAETAYKLFLHEKG</sequence>
<name>LSRF_YERE8</name>
<protein>
    <recommendedName>
        <fullName evidence="1">3-hydroxy-5-phosphonooxypentane-2,4-dione thiolase</fullName>
        <ecNumber evidence="1">2.3.1.245</ecNumber>
    </recommendedName>
</protein>
<evidence type="ECO:0000255" key="1">
    <source>
        <dbReference type="HAMAP-Rule" id="MF_02052"/>
    </source>
</evidence>
<proteinExistence type="inferred from homology"/>
<organism>
    <name type="scientific">Yersinia enterocolitica serotype O:8 / biotype 1B (strain NCTC 13174 / 8081)</name>
    <dbReference type="NCBI Taxonomy" id="393305"/>
    <lineage>
        <taxon>Bacteria</taxon>
        <taxon>Pseudomonadati</taxon>
        <taxon>Pseudomonadota</taxon>
        <taxon>Gammaproteobacteria</taxon>
        <taxon>Enterobacterales</taxon>
        <taxon>Yersiniaceae</taxon>
        <taxon>Yersinia</taxon>
    </lineage>
</organism>
<accession>A1JJ51</accession>
<gene>
    <name evidence="1" type="primary">lsrF</name>
    <name type="ordered locus">YE0524</name>
</gene>
<dbReference type="EC" id="2.3.1.245" evidence="1"/>
<dbReference type="EMBL" id="AM286415">
    <property type="protein sequence ID" value="CAL10642.1"/>
    <property type="molecule type" value="Genomic_DNA"/>
</dbReference>
<dbReference type="RefSeq" id="WP_005175220.1">
    <property type="nucleotide sequence ID" value="NC_008800.1"/>
</dbReference>
<dbReference type="RefSeq" id="YP_001004884.1">
    <property type="nucleotide sequence ID" value="NC_008800.1"/>
</dbReference>
<dbReference type="SMR" id="A1JJ51"/>
<dbReference type="GeneID" id="93969007"/>
<dbReference type="KEGG" id="yen:YE0524"/>
<dbReference type="PATRIC" id="fig|393305.7.peg.614"/>
<dbReference type="eggNOG" id="COG1830">
    <property type="taxonomic scope" value="Bacteria"/>
</dbReference>
<dbReference type="HOGENOM" id="CLU_057069_1_0_6"/>
<dbReference type="OrthoDB" id="5915071at2"/>
<dbReference type="Proteomes" id="UP000000642">
    <property type="component" value="Chromosome"/>
</dbReference>
<dbReference type="GO" id="GO:0005737">
    <property type="term" value="C:cytoplasm"/>
    <property type="evidence" value="ECO:0007669"/>
    <property type="project" value="UniProtKB-SubCell"/>
</dbReference>
<dbReference type="GO" id="GO:0016747">
    <property type="term" value="F:acyltransferase activity, transferring groups other than amino-acyl groups"/>
    <property type="evidence" value="ECO:0007669"/>
    <property type="project" value="UniProtKB-UniRule"/>
</dbReference>
<dbReference type="GO" id="GO:0004332">
    <property type="term" value="F:fructose-bisphosphate aldolase activity"/>
    <property type="evidence" value="ECO:0007669"/>
    <property type="project" value="InterPro"/>
</dbReference>
<dbReference type="CDD" id="cd00958">
    <property type="entry name" value="DhnA"/>
    <property type="match status" value="1"/>
</dbReference>
<dbReference type="Gene3D" id="3.20.20.70">
    <property type="entry name" value="Aldolase class I"/>
    <property type="match status" value="1"/>
</dbReference>
<dbReference type="HAMAP" id="MF_02052">
    <property type="entry name" value="LsrF"/>
    <property type="match status" value="1"/>
</dbReference>
<dbReference type="InterPro" id="IPR013785">
    <property type="entry name" value="Aldolase_TIM"/>
</dbReference>
<dbReference type="InterPro" id="IPR002915">
    <property type="entry name" value="DeoC/FbaB/LacD_aldolase"/>
</dbReference>
<dbReference type="InterPro" id="IPR050456">
    <property type="entry name" value="DeoC/FbaB_aldolase"/>
</dbReference>
<dbReference type="InterPro" id="IPR041720">
    <property type="entry name" value="FbaB-like"/>
</dbReference>
<dbReference type="InterPro" id="IPR033673">
    <property type="entry name" value="LsrF"/>
</dbReference>
<dbReference type="NCBIfam" id="NF006081">
    <property type="entry name" value="PRK08227.1"/>
    <property type="match status" value="1"/>
</dbReference>
<dbReference type="PANTHER" id="PTHR47916:SF1">
    <property type="entry name" value="3-HYDROXY-5-PHOSPHONOOXYPENTANE-2,4-DIONE THIOLASE"/>
    <property type="match status" value="1"/>
</dbReference>
<dbReference type="PANTHER" id="PTHR47916">
    <property type="entry name" value="FRUCTOSE-BISPHOSPHATE ALDOLASE CLASS 1"/>
    <property type="match status" value="1"/>
</dbReference>
<dbReference type="Pfam" id="PF01791">
    <property type="entry name" value="DeoC"/>
    <property type="match status" value="1"/>
</dbReference>
<dbReference type="PIRSF" id="PIRSF038992">
    <property type="entry name" value="Aldolase_Ia"/>
    <property type="match status" value="1"/>
</dbReference>
<dbReference type="SMART" id="SM01133">
    <property type="entry name" value="DeoC"/>
    <property type="match status" value="1"/>
</dbReference>
<dbReference type="SUPFAM" id="SSF51569">
    <property type="entry name" value="Aldolase"/>
    <property type="match status" value="1"/>
</dbReference>
<keyword id="KW-0963">Cytoplasm</keyword>
<keyword id="KW-0704">Schiff base</keyword>
<keyword id="KW-0808">Transferase</keyword>